<evidence type="ECO:0000255" key="1">
    <source>
        <dbReference type="HAMAP-Rule" id="MF_00362"/>
    </source>
</evidence>
<evidence type="ECO:0000305" key="2"/>
<organism>
    <name type="scientific">Staphylococcus aureus (strain USA300)</name>
    <dbReference type="NCBI Taxonomy" id="367830"/>
    <lineage>
        <taxon>Bacteria</taxon>
        <taxon>Bacillati</taxon>
        <taxon>Bacillota</taxon>
        <taxon>Bacilli</taxon>
        <taxon>Bacillales</taxon>
        <taxon>Staphylococcaceae</taxon>
        <taxon>Staphylococcus</taxon>
    </lineage>
</organism>
<feature type="chain" id="PRO_0000234891" description="Large ribosomal subunit protein uL10">
    <location>
        <begin position="1"/>
        <end position="166"/>
    </location>
</feature>
<keyword id="KW-0687">Ribonucleoprotein</keyword>
<keyword id="KW-0689">Ribosomal protein</keyword>
<keyword id="KW-0694">RNA-binding</keyword>
<keyword id="KW-0699">rRNA-binding</keyword>
<dbReference type="EMBL" id="CP000255">
    <property type="protein sequence ID" value="ABD21228.1"/>
    <property type="molecule type" value="Genomic_DNA"/>
</dbReference>
<dbReference type="RefSeq" id="WP_001273085.1">
    <property type="nucleotide sequence ID" value="NZ_CP027476.1"/>
</dbReference>
<dbReference type="SMR" id="Q2FJA1"/>
<dbReference type="KEGG" id="saa:SAUSA300_0524"/>
<dbReference type="HOGENOM" id="CLU_092227_2_0_9"/>
<dbReference type="OMA" id="VRDQKQA"/>
<dbReference type="Proteomes" id="UP000001939">
    <property type="component" value="Chromosome"/>
</dbReference>
<dbReference type="GO" id="GO:0015934">
    <property type="term" value="C:large ribosomal subunit"/>
    <property type="evidence" value="ECO:0007669"/>
    <property type="project" value="InterPro"/>
</dbReference>
<dbReference type="GO" id="GO:0070180">
    <property type="term" value="F:large ribosomal subunit rRNA binding"/>
    <property type="evidence" value="ECO:0007669"/>
    <property type="project" value="UniProtKB-UniRule"/>
</dbReference>
<dbReference type="GO" id="GO:0003735">
    <property type="term" value="F:structural constituent of ribosome"/>
    <property type="evidence" value="ECO:0007669"/>
    <property type="project" value="InterPro"/>
</dbReference>
<dbReference type="GO" id="GO:0006412">
    <property type="term" value="P:translation"/>
    <property type="evidence" value="ECO:0007669"/>
    <property type="project" value="UniProtKB-UniRule"/>
</dbReference>
<dbReference type="CDD" id="cd05797">
    <property type="entry name" value="Ribosomal_L10"/>
    <property type="match status" value="1"/>
</dbReference>
<dbReference type="FunFam" id="3.30.70.1730:FF:000001">
    <property type="entry name" value="50S ribosomal protein L10"/>
    <property type="match status" value="1"/>
</dbReference>
<dbReference type="Gene3D" id="3.30.70.1730">
    <property type="match status" value="1"/>
</dbReference>
<dbReference type="Gene3D" id="6.10.250.290">
    <property type="match status" value="1"/>
</dbReference>
<dbReference type="HAMAP" id="MF_00362">
    <property type="entry name" value="Ribosomal_uL10"/>
    <property type="match status" value="1"/>
</dbReference>
<dbReference type="InterPro" id="IPR001790">
    <property type="entry name" value="Ribosomal_uL10"/>
</dbReference>
<dbReference type="InterPro" id="IPR043141">
    <property type="entry name" value="Ribosomal_uL10-like_sf"/>
</dbReference>
<dbReference type="InterPro" id="IPR022973">
    <property type="entry name" value="Ribosomal_uL10_bac"/>
</dbReference>
<dbReference type="InterPro" id="IPR047865">
    <property type="entry name" value="Ribosomal_uL10_bac_type"/>
</dbReference>
<dbReference type="InterPro" id="IPR002363">
    <property type="entry name" value="Ribosomal_uL10_CS_bac"/>
</dbReference>
<dbReference type="NCBIfam" id="NF000955">
    <property type="entry name" value="PRK00099.1-1"/>
    <property type="match status" value="1"/>
</dbReference>
<dbReference type="PANTHER" id="PTHR11560">
    <property type="entry name" value="39S RIBOSOMAL PROTEIN L10, MITOCHONDRIAL"/>
    <property type="match status" value="1"/>
</dbReference>
<dbReference type="Pfam" id="PF00466">
    <property type="entry name" value="Ribosomal_L10"/>
    <property type="match status" value="1"/>
</dbReference>
<dbReference type="SUPFAM" id="SSF160369">
    <property type="entry name" value="Ribosomal protein L10-like"/>
    <property type="match status" value="1"/>
</dbReference>
<dbReference type="PROSITE" id="PS01109">
    <property type="entry name" value="RIBOSOMAL_L10"/>
    <property type="match status" value="1"/>
</dbReference>
<comment type="function">
    <text evidence="1">Forms part of the ribosomal stalk, playing a central role in the interaction of the ribosome with GTP-bound translation factors.</text>
</comment>
<comment type="subunit">
    <text evidence="1">Part of the ribosomal stalk of the 50S ribosomal subunit. The N-terminus interacts with L11 and the large rRNA to form the base of the stalk. The C-terminus forms an elongated spine to which L12 dimers bind in a sequential fashion forming a multimeric L10(L12)X complex.</text>
</comment>
<comment type="similarity">
    <text evidence="1">Belongs to the universal ribosomal protein uL10 family.</text>
</comment>
<name>RL10_STAA3</name>
<gene>
    <name evidence="1" type="primary">rplJ</name>
    <name type="ordered locus">SAUSA300_0524</name>
</gene>
<protein>
    <recommendedName>
        <fullName evidence="1">Large ribosomal subunit protein uL10</fullName>
    </recommendedName>
    <alternativeName>
        <fullName evidence="2">50S ribosomal protein L10</fullName>
    </alternativeName>
</protein>
<sequence>MSAIIEAKKQLVDEIAEVLSNSVSTVIVDYRGLTVAEVTDLRSQLREAGVEYKVYKNTMVRRAAEKAGIEGLDEFLTGPTAIATSSEDAVAAAKVISGFAKDHEALEIKSGVMEGNVITAEEVKTVGSLPSHDGLVSMLLSVLQAPVRNFAYAVKAIGEQKEENAE</sequence>
<proteinExistence type="inferred from homology"/>
<accession>Q2FJA1</accession>
<reference key="1">
    <citation type="journal article" date="2006" name="Lancet">
        <title>Complete genome sequence of USA300, an epidemic clone of community-acquired meticillin-resistant Staphylococcus aureus.</title>
        <authorList>
            <person name="Diep B.A."/>
            <person name="Gill S.R."/>
            <person name="Chang R.F."/>
            <person name="Phan T.H."/>
            <person name="Chen J.H."/>
            <person name="Davidson M.G."/>
            <person name="Lin F."/>
            <person name="Lin J."/>
            <person name="Carleton H.A."/>
            <person name="Mongodin E.F."/>
            <person name="Sensabaugh G.F."/>
            <person name="Perdreau-Remington F."/>
        </authorList>
    </citation>
    <scope>NUCLEOTIDE SEQUENCE [LARGE SCALE GENOMIC DNA]</scope>
    <scope>ANTIBIOTIC RESISTANCE</scope>
    <source>
        <strain>USA300</strain>
    </source>
</reference>